<proteinExistence type="evidence at transcript level"/>
<keyword id="KW-0150">Chloroplast</keyword>
<keyword id="KW-0378">Hydrolase</keyword>
<keyword id="KW-0460">Magnesium</keyword>
<keyword id="KW-0479">Metal-binding</keyword>
<keyword id="KW-0934">Plastid</keyword>
<keyword id="KW-1185">Reference proteome</keyword>
<keyword id="KW-0809">Transit peptide</keyword>
<name>GPPL1_ARATH</name>
<evidence type="ECO:0000250" key="1"/>
<evidence type="ECO:0000255" key="2"/>
<evidence type="ECO:0000305" key="3"/>
<reference key="1">
    <citation type="journal article" date="1999" name="Nature">
        <title>Sequence and analysis of chromosome 4 of the plant Arabidopsis thaliana.</title>
        <authorList>
            <person name="Mayer K.F.X."/>
            <person name="Schueller C."/>
            <person name="Wambutt R."/>
            <person name="Murphy G."/>
            <person name="Volckaert G."/>
            <person name="Pohl T."/>
            <person name="Duesterhoeft A."/>
            <person name="Stiekema W."/>
            <person name="Entian K.-D."/>
            <person name="Terryn N."/>
            <person name="Harris B."/>
            <person name="Ansorge W."/>
            <person name="Brandt P."/>
            <person name="Grivell L.A."/>
            <person name="Rieger M."/>
            <person name="Weichselgartner M."/>
            <person name="de Simone V."/>
            <person name="Obermaier B."/>
            <person name="Mache R."/>
            <person name="Mueller M."/>
            <person name="Kreis M."/>
            <person name="Delseny M."/>
            <person name="Puigdomenech P."/>
            <person name="Watson M."/>
            <person name="Schmidtheini T."/>
            <person name="Reichert B."/>
            <person name="Portetelle D."/>
            <person name="Perez-Alonso M."/>
            <person name="Boutry M."/>
            <person name="Bancroft I."/>
            <person name="Vos P."/>
            <person name="Hoheisel J."/>
            <person name="Zimmermann W."/>
            <person name="Wedler H."/>
            <person name="Ridley P."/>
            <person name="Langham S.-A."/>
            <person name="McCullagh B."/>
            <person name="Bilham L."/>
            <person name="Robben J."/>
            <person name="van der Schueren J."/>
            <person name="Grymonprez B."/>
            <person name="Chuang Y.-J."/>
            <person name="Vandenbussche F."/>
            <person name="Braeken M."/>
            <person name="Weltjens I."/>
            <person name="Voet M."/>
            <person name="Bastiaens I."/>
            <person name="Aert R."/>
            <person name="Defoor E."/>
            <person name="Weitzenegger T."/>
            <person name="Bothe G."/>
            <person name="Ramsperger U."/>
            <person name="Hilbert H."/>
            <person name="Braun M."/>
            <person name="Holzer E."/>
            <person name="Brandt A."/>
            <person name="Peters S."/>
            <person name="van Staveren M."/>
            <person name="Dirkse W."/>
            <person name="Mooijman P."/>
            <person name="Klein Lankhorst R."/>
            <person name="Rose M."/>
            <person name="Hauf J."/>
            <person name="Koetter P."/>
            <person name="Berneiser S."/>
            <person name="Hempel S."/>
            <person name="Feldpausch M."/>
            <person name="Lamberth S."/>
            <person name="Van den Daele H."/>
            <person name="De Keyser A."/>
            <person name="Buysshaert C."/>
            <person name="Gielen J."/>
            <person name="Villarroel R."/>
            <person name="De Clercq R."/>
            <person name="van Montagu M."/>
            <person name="Rogers J."/>
            <person name="Cronin A."/>
            <person name="Quail M.A."/>
            <person name="Bray-Allen S."/>
            <person name="Clark L."/>
            <person name="Doggett J."/>
            <person name="Hall S."/>
            <person name="Kay M."/>
            <person name="Lennard N."/>
            <person name="McLay K."/>
            <person name="Mayes R."/>
            <person name="Pettett A."/>
            <person name="Rajandream M.A."/>
            <person name="Lyne M."/>
            <person name="Benes V."/>
            <person name="Rechmann S."/>
            <person name="Borkova D."/>
            <person name="Bloecker H."/>
            <person name="Scharfe M."/>
            <person name="Grimm M."/>
            <person name="Loehnert T.-H."/>
            <person name="Dose S."/>
            <person name="de Haan M."/>
            <person name="Maarse A.C."/>
            <person name="Schaefer M."/>
            <person name="Mueller-Auer S."/>
            <person name="Gabel C."/>
            <person name="Fuchs M."/>
            <person name="Fartmann B."/>
            <person name="Granderath K."/>
            <person name="Dauner D."/>
            <person name="Herzl A."/>
            <person name="Neumann S."/>
            <person name="Argiriou A."/>
            <person name="Vitale D."/>
            <person name="Liguori R."/>
            <person name="Piravandi E."/>
            <person name="Massenet O."/>
            <person name="Quigley F."/>
            <person name="Clabauld G."/>
            <person name="Muendlein A."/>
            <person name="Felber R."/>
            <person name="Schnabl S."/>
            <person name="Hiller R."/>
            <person name="Schmidt W."/>
            <person name="Lecharny A."/>
            <person name="Aubourg S."/>
            <person name="Chefdor F."/>
            <person name="Cooke R."/>
            <person name="Berger C."/>
            <person name="Monfort A."/>
            <person name="Casacuberta E."/>
            <person name="Gibbons T."/>
            <person name="Weber N."/>
            <person name="Vandenbol M."/>
            <person name="Bargues M."/>
            <person name="Terol J."/>
            <person name="Torres A."/>
            <person name="Perez-Perez A."/>
            <person name="Purnelle B."/>
            <person name="Bent E."/>
            <person name="Johnson S."/>
            <person name="Tacon D."/>
            <person name="Jesse T."/>
            <person name="Heijnen L."/>
            <person name="Schwarz S."/>
            <person name="Scholler P."/>
            <person name="Heber S."/>
            <person name="Francs P."/>
            <person name="Bielke C."/>
            <person name="Frishman D."/>
            <person name="Haase D."/>
            <person name="Lemcke K."/>
            <person name="Mewes H.-W."/>
            <person name="Stocker S."/>
            <person name="Zaccaria P."/>
            <person name="Bevan M."/>
            <person name="Wilson R.K."/>
            <person name="de la Bastide M."/>
            <person name="Habermann K."/>
            <person name="Parnell L."/>
            <person name="Dedhia N."/>
            <person name="Gnoj L."/>
            <person name="Schutz K."/>
            <person name="Huang E."/>
            <person name="Spiegel L."/>
            <person name="Sekhon M."/>
            <person name="Murray J."/>
            <person name="Sheet P."/>
            <person name="Cordes M."/>
            <person name="Abu-Threideh J."/>
            <person name="Stoneking T."/>
            <person name="Kalicki J."/>
            <person name="Graves T."/>
            <person name="Harmon G."/>
            <person name="Edwards J."/>
            <person name="Latreille P."/>
            <person name="Courtney L."/>
            <person name="Cloud J."/>
            <person name="Abbott A."/>
            <person name="Scott K."/>
            <person name="Johnson D."/>
            <person name="Minx P."/>
            <person name="Bentley D."/>
            <person name="Fulton B."/>
            <person name="Miller N."/>
            <person name="Greco T."/>
            <person name="Kemp K."/>
            <person name="Kramer J."/>
            <person name="Fulton L."/>
            <person name="Mardis E."/>
            <person name="Dante M."/>
            <person name="Pepin K."/>
            <person name="Hillier L.W."/>
            <person name="Nelson J."/>
            <person name="Spieth J."/>
            <person name="Ryan E."/>
            <person name="Andrews S."/>
            <person name="Geisel C."/>
            <person name="Layman D."/>
            <person name="Du H."/>
            <person name="Ali J."/>
            <person name="Berghoff A."/>
            <person name="Jones K."/>
            <person name="Drone K."/>
            <person name="Cotton M."/>
            <person name="Joshu C."/>
            <person name="Antonoiu B."/>
            <person name="Zidanic M."/>
            <person name="Strong C."/>
            <person name="Sun H."/>
            <person name="Lamar B."/>
            <person name="Yordan C."/>
            <person name="Ma P."/>
            <person name="Zhong J."/>
            <person name="Preston R."/>
            <person name="Vil D."/>
            <person name="Shekher M."/>
            <person name="Matero A."/>
            <person name="Shah R."/>
            <person name="Swaby I.K."/>
            <person name="O'Shaughnessy A."/>
            <person name="Rodriguez M."/>
            <person name="Hoffman J."/>
            <person name="Till S."/>
            <person name="Granat S."/>
            <person name="Shohdy N."/>
            <person name="Hasegawa A."/>
            <person name="Hameed A."/>
            <person name="Lodhi M."/>
            <person name="Johnson A."/>
            <person name="Chen E."/>
            <person name="Marra M.A."/>
            <person name="Martienssen R."/>
            <person name="McCombie W.R."/>
        </authorList>
    </citation>
    <scope>NUCLEOTIDE SEQUENCE [LARGE SCALE GENOMIC DNA]</scope>
    <source>
        <strain>cv. Columbia</strain>
    </source>
</reference>
<reference key="2">
    <citation type="journal article" date="2017" name="Plant J.">
        <title>Araport11: a complete reannotation of the Arabidopsis thaliana reference genome.</title>
        <authorList>
            <person name="Cheng C.Y."/>
            <person name="Krishnakumar V."/>
            <person name="Chan A.P."/>
            <person name="Thibaud-Nissen F."/>
            <person name="Schobel S."/>
            <person name="Town C.D."/>
        </authorList>
    </citation>
    <scope>GENOME REANNOTATION</scope>
    <source>
        <strain>cv. Columbia</strain>
    </source>
</reference>
<reference key="3">
    <citation type="journal article" date="2003" name="Science">
        <title>Empirical analysis of transcriptional activity in the Arabidopsis genome.</title>
        <authorList>
            <person name="Yamada K."/>
            <person name="Lim J."/>
            <person name="Dale J.M."/>
            <person name="Chen H."/>
            <person name="Shinn P."/>
            <person name="Palm C.J."/>
            <person name="Southwick A.M."/>
            <person name="Wu H.C."/>
            <person name="Kim C.J."/>
            <person name="Nguyen M."/>
            <person name="Pham P.K."/>
            <person name="Cheuk R.F."/>
            <person name="Karlin-Newmann G."/>
            <person name="Liu S.X."/>
            <person name="Lam B."/>
            <person name="Sakano H."/>
            <person name="Wu T."/>
            <person name="Yu G."/>
            <person name="Miranda M."/>
            <person name="Quach H.L."/>
            <person name="Tripp M."/>
            <person name="Chang C.H."/>
            <person name="Lee J.M."/>
            <person name="Toriumi M.J."/>
            <person name="Chan M.M."/>
            <person name="Tang C.C."/>
            <person name="Onodera C.S."/>
            <person name="Deng J.M."/>
            <person name="Akiyama K."/>
            <person name="Ansari Y."/>
            <person name="Arakawa T."/>
            <person name="Banh J."/>
            <person name="Banno F."/>
            <person name="Bowser L."/>
            <person name="Brooks S.Y."/>
            <person name="Carninci P."/>
            <person name="Chao Q."/>
            <person name="Choy N."/>
            <person name="Enju A."/>
            <person name="Goldsmith A.D."/>
            <person name="Gurjal M."/>
            <person name="Hansen N.F."/>
            <person name="Hayashizaki Y."/>
            <person name="Johnson-Hopson C."/>
            <person name="Hsuan V.W."/>
            <person name="Iida K."/>
            <person name="Karnes M."/>
            <person name="Khan S."/>
            <person name="Koesema E."/>
            <person name="Ishida J."/>
            <person name="Jiang P.X."/>
            <person name="Jones T."/>
            <person name="Kawai J."/>
            <person name="Kamiya A."/>
            <person name="Meyers C."/>
            <person name="Nakajima M."/>
            <person name="Narusaka M."/>
            <person name="Seki M."/>
            <person name="Sakurai T."/>
            <person name="Satou M."/>
            <person name="Tamse R."/>
            <person name="Vaysberg M."/>
            <person name="Wallender E.K."/>
            <person name="Wong C."/>
            <person name="Yamamura Y."/>
            <person name="Yuan S."/>
            <person name="Shinozaki K."/>
            <person name="Davis R.W."/>
            <person name="Theologis A."/>
            <person name="Ecker J.R."/>
        </authorList>
    </citation>
    <scope>NUCLEOTIDE SEQUENCE [LARGE SCALE MRNA]</scope>
    <source>
        <strain>cv. Columbia</strain>
    </source>
</reference>
<reference key="4">
    <citation type="submission" date="2004-09" db="EMBL/GenBank/DDBJ databases">
        <title>Large-scale analysis of RIKEN Arabidopsis full-length (RAFL) cDNAs.</title>
        <authorList>
            <person name="Totoki Y."/>
            <person name="Seki M."/>
            <person name="Ishida J."/>
            <person name="Nakajima M."/>
            <person name="Enju A."/>
            <person name="Kamiya A."/>
            <person name="Narusaka M."/>
            <person name="Shin-i T."/>
            <person name="Nakagawa M."/>
            <person name="Sakamoto N."/>
            <person name="Oishi K."/>
            <person name="Kohara Y."/>
            <person name="Kobayashi M."/>
            <person name="Toyoda A."/>
            <person name="Sakaki Y."/>
            <person name="Sakurai T."/>
            <person name="Iida K."/>
            <person name="Akiyama K."/>
            <person name="Satou M."/>
            <person name="Toyoda T."/>
            <person name="Konagaya A."/>
            <person name="Carninci P."/>
            <person name="Kawai J."/>
            <person name="Hayashizaki Y."/>
            <person name="Shinozaki K."/>
        </authorList>
    </citation>
    <scope>NUCLEOTIDE SEQUENCE [LARGE SCALE MRNA]</scope>
    <source>
        <strain>cv. Columbia</strain>
    </source>
</reference>
<reference key="5">
    <citation type="submission" date="2002-03" db="EMBL/GenBank/DDBJ databases">
        <title>Full-length cDNA from Arabidopsis thaliana.</title>
        <authorList>
            <person name="Brover V.V."/>
            <person name="Troukhan M.E."/>
            <person name="Alexandrov N.A."/>
            <person name="Lu Y.-P."/>
            <person name="Flavell R.B."/>
            <person name="Feldmann K.A."/>
        </authorList>
    </citation>
    <scope>NUCLEOTIDE SEQUENCE [LARGE SCALE MRNA]</scope>
</reference>
<feature type="transit peptide" description="Chloroplast" evidence="2">
    <location>
        <begin position="1"/>
        <end position="46"/>
    </location>
</feature>
<feature type="chain" id="PRO_0000424320" description="Haloacid dehalogenase-like hydrolase domain-containing protein At4g39970">
    <location>
        <begin position="47"/>
        <end position="316"/>
    </location>
</feature>
<feature type="active site" description="Nucleophile" evidence="1">
    <location>
        <position position="69"/>
    </location>
</feature>
<feature type="active site" description="Proton donor" evidence="1">
    <location>
        <position position="71"/>
    </location>
</feature>
<feature type="binding site" evidence="1">
    <location>
        <position position="69"/>
    </location>
    <ligand>
        <name>Mg(2+)</name>
        <dbReference type="ChEBI" id="CHEBI:18420"/>
    </ligand>
</feature>
<feature type="binding site" evidence="1">
    <location>
        <position position="71"/>
    </location>
    <ligand>
        <name>Mg(2+)</name>
        <dbReference type="ChEBI" id="CHEBI:18420"/>
    </ligand>
</feature>
<feature type="binding site" evidence="1">
    <location>
        <position position="259"/>
    </location>
    <ligand>
        <name>Mg(2+)</name>
        <dbReference type="ChEBI" id="CHEBI:18420"/>
    </ligand>
</feature>
<feature type="sequence conflict" description="In Ref. 5; AAM65187." evidence="3" ref="5">
    <original>V</original>
    <variation>A</variation>
    <location>
        <position position="51"/>
    </location>
</feature>
<feature type="sequence conflict" description="In Ref. 5; AAM65187." evidence="3" ref="5">
    <original>L</original>
    <variation>S</variation>
    <location>
        <position position="60"/>
    </location>
</feature>
<feature type="sequence conflict" description="In Ref. 5; AAM65187." evidence="3" ref="5">
    <original>E</original>
    <variation>A</variation>
    <location>
        <position position="102"/>
    </location>
</feature>
<feature type="sequence conflict" description="In Ref. 5; AAM65187." evidence="3" ref="5">
    <original>E</original>
    <variation>D</variation>
    <location>
        <position position="163"/>
    </location>
</feature>
<feature type="sequence conflict" description="In Ref. 5; AAM65187." evidence="3" ref="5">
    <original>I</original>
    <variation>L</variation>
    <location>
        <position position="213"/>
    </location>
</feature>
<feature type="sequence conflict" description="In Ref. 5; AAM65187." evidence="3" ref="5">
    <original>E</original>
    <variation>G</variation>
    <location>
        <position position="258"/>
    </location>
</feature>
<feature type="sequence conflict" description="In Ref. 5; AAM65187." evidence="3" ref="5">
    <original>N</original>
    <variation>D</variation>
    <location>
        <position position="286"/>
    </location>
</feature>
<feature type="sequence conflict" description="In Ref. 5; AAM65187." evidence="3" ref="5">
    <original>K</original>
    <variation>T</variation>
    <location>
        <position position="303"/>
    </location>
</feature>
<feature type="sequence conflict" description="In Ref. 3; AAM83233/AAN28795." evidence="3" ref="3">
    <original>E</original>
    <variation>K</variation>
    <location>
        <position position="306"/>
    </location>
</feature>
<gene>
    <name type="ordered locus">At4g39970</name>
    <name type="ORF">T5J17.140</name>
</gene>
<accession>Q680K2</accession>
<accession>Q8L7U1</accession>
<accession>Q8LAS1</accession>
<accession>Q9SMQ8</accession>
<protein>
    <recommendedName>
        <fullName>Haloacid dehalogenase-like hydrolase domain-containing protein At4g39970</fullName>
        <ecNumber>3.1.3.-</ecNumber>
    </recommendedName>
</protein>
<dbReference type="EC" id="3.1.3.-"/>
<dbReference type="EMBL" id="AL035708">
    <property type="protein sequence ID" value="CAB38910.1"/>
    <property type="status" value="ALT_SEQ"/>
    <property type="molecule type" value="Genomic_DNA"/>
</dbReference>
<dbReference type="EMBL" id="AL161596">
    <property type="protein sequence ID" value="CAB80660.1"/>
    <property type="status" value="ALT_SEQ"/>
    <property type="molecule type" value="Genomic_DNA"/>
</dbReference>
<dbReference type="EMBL" id="CP002687">
    <property type="protein sequence ID" value="AEE87147.1"/>
    <property type="molecule type" value="Genomic_DNA"/>
</dbReference>
<dbReference type="EMBL" id="AY127008">
    <property type="protein sequence ID" value="AAM83233.1"/>
    <property type="molecule type" value="mRNA"/>
</dbReference>
<dbReference type="EMBL" id="AY143856">
    <property type="protein sequence ID" value="AAN28795.1"/>
    <property type="molecule type" value="mRNA"/>
</dbReference>
<dbReference type="EMBL" id="AK175831">
    <property type="protein sequence ID" value="BAD43594.1"/>
    <property type="molecule type" value="mRNA"/>
</dbReference>
<dbReference type="EMBL" id="AK175865">
    <property type="protein sequence ID" value="BAD43628.1"/>
    <property type="molecule type" value="mRNA"/>
</dbReference>
<dbReference type="EMBL" id="AK176082">
    <property type="protein sequence ID" value="BAD43845.1"/>
    <property type="molecule type" value="mRNA"/>
</dbReference>
<dbReference type="EMBL" id="AY087649">
    <property type="protein sequence ID" value="AAM65187.1"/>
    <property type="molecule type" value="mRNA"/>
</dbReference>
<dbReference type="PIR" id="T06103">
    <property type="entry name" value="T06103"/>
</dbReference>
<dbReference type="RefSeq" id="NP_568077.1">
    <property type="nucleotide sequence ID" value="NM_120161.3"/>
</dbReference>
<dbReference type="SMR" id="Q680K2"/>
<dbReference type="FunCoup" id="Q680K2">
    <property type="interactions" value="991"/>
</dbReference>
<dbReference type="STRING" id="3702.Q680K2"/>
<dbReference type="PaxDb" id="3702-AT4G39970.1"/>
<dbReference type="ProteomicsDB" id="220639"/>
<dbReference type="EnsemblPlants" id="AT4G39970.1">
    <property type="protein sequence ID" value="AT4G39970.1"/>
    <property type="gene ID" value="AT4G39970"/>
</dbReference>
<dbReference type="GeneID" id="830158"/>
<dbReference type="Gramene" id="AT4G39970.1">
    <property type="protein sequence ID" value="AT4G39970.1"/>
    <property type="gene ID" value="AT4G39970"/>
</dbReference>
<dbReference type="KEGG" id="ath:AT4G39970"/>
<dbReference type="Araport" id="AT4G39970"/>
<dbReference type="TAIR" id="AT4G39970"/>
<dbReference type="eggNOG" id="ENOG502QPPW">
    <property type="taxonomic scope" value="Eukaryota"/>
</dbReference>
<dbReference type="HOGENOM" id="CLU_045011_0_1_1"/>
<dbReference type="InParanoid" id="Q680K2"/>
<dbReference type="OMA" id="HRTAYND"/>
<dbReference type="PhylomeDB" id="Q680K2"/>
<dbReference type="PRO" id="PR:Q680K2"/>
<dbReference type="Proteomes" id="UP000006548">
    <property type="component" value="Chromosome 4"/>
</dbReference>
<dbReference type="ExpressionAtlas" id="Q680K2">
    <property type="expression patterns" value="baseline and differential"/>
</dbReference>
<dbReference type="GO" id="GO:0009507">
    <property type="term" value="C:chloroplast"/>
    <property type="evidence" value="ECO:0007005"/>
    <property type="project" value="TAIR"/>
</dbReference>
<dbReference type="GO" id="GO:0009941">
    <property type="term" value="C:chloroplast envelope"/>
    <property type="evidence" value="ECO:0007005"/>
    <property type="project" value="TAIR"/>
</dbReference>
<dbReference type="GO" id="GO:0009570">
    <property type="term" value="C:chloroplast stroma"/>
    <property type="evidence" value="ECO:0007005"/>
    <property type="project" value="TAIR"/>
</dbReference>
<dbReference type="GO" id="GO:0005886">
    <property type="term" value="C:plasma membrane"/>
    <property type="evidence" value="ECO:0007005"/>
    <property type="project" value="TAIR"/>
</dbReference>
<dbReference type="GO" id="GO:0016787">
    <property type="term" value="F:hydrolase activity"/>
    <property type="evidence" value="ECO:0007669"/>
    <property type="project" value="UniProtKB-KW"/>
</dbReference>
<dbReference type="GO" id="GO:0046872">
    <property type="term" value="F:metal ion binding"/>
    <property type="evidence" value="ECO:0007669"/>
    <property type="project" value="UniProtKB-KW"/>
</dbReference>
<dbReference type="CDD" id="cd07528">
    <property type="entry name" value="HAD_CbbY-like"/>
    <property type="match status" value="1"/>
</dbReference>
<dbReference type="FunFam" id="3.40.50.1000:FF:000036">
    <property type="entry name" value="HAD family hydrolase"/>
    <property type="match status" value="1"/>
</dbReference>
<dbReference type="FunFam" id="1.10.150.240:FF:000042">
    <property type="entry name" value="Haloacid dehalogenase-like hydrolase domain-containing protein At4g39970"/>
    <property type="match status" value="1"/>
</dbReference>
<dbReference type="Gene3D" id="3.40.50.1000">
    <property type="entry name" value="HAD superfamily/HAD-like"/>
    <property type="match status" value="1"/>
</dbReference>
<dbReference type="Gene3D" id="1.10.150.240">
    <property type="entry name" value="Putative phosphatase, domain 2"/>
    <property type="match status" value="1"/>
</dbReference>
<dbReference type="InterPro" id="IPR044999">
    <property type="entry name" value="CbbY-like"/>
</dbReference>
<dbReference type="InterPro" id="IPR036412">
    <property type="entry name" value="HAD-like_sf"/>
</dbReference>
<dbReference type="InterPro" id="IPR006439">
    <property type="entry name" value="HAD-SF_hydro_IA"/>
</dbReference>
<dbReference type="InterPro" id="IPR023214">
    <property type="entry name" value="HAD_sf"/>
</dbReference>
<dbReference type="InterPro" id="IPR023198">
    <property type="entry name" value="PGP-like_dom2"/>
</dbReference>
<dbReference type="NCBIfam" id="TIGR01509">
    <property type="entry name" value="HAD-SF-IA-v3"/>
    <property type="match status" value="1"/>
</dbReference>
<dbReference type="PANTHER" id="PTHR42896:SF4">
    <property type="entry name" value="OS08G0485900 PROTEIN"/>
    <property type="match status" value="1"/>
</dbReference>
<dbReference type="PANTHER" id="PTHR42896">
    <property type="entry name" value="XYLULOSE-1,5-BISPHOSPHATE (XUBP) PHOSPHATASE"/>
    <property type="match status" value="1"/>
</dbReference>
<dbReference type="Pfam" id="PF00702">
    <property type="entry name" value="Hydrolase"/>
    <property type="match status" value="1"/>
</dbReference>
<dbReference type="SFLD" id="SFLDG01135">
    <property type="entry name" value="C1.5.6:_HAD__Beta-PGM__Phospha"/>
    <property type="match status" value="1"/>
</dbReference>
<dbReference type="SFLD" id="SFLDF00035">
    <property type="entry name" value="phosphoglycolate_phosphatase"/>
    <property type="match status" value="1"/>
</dbReference>
<dbReference type="SUPFAM" id="SSF56784">
    <property type="entry name" value="HAD-like"/>
    <property type="match status" value="1"/>
</dbReference>
<sequence>MAVSCNHSAILFSPSSTAGSSSVTSSSSLIGFPRFQTLRFKSRSVYSKSRVSSPVSALPLRSLEALIFDCDGVILESENLHRQAYNDAFSHFDVRCPPSSSESLDWSLEFYDKFQNLVGGGKPKMRWYFKENGWPTSTIFDSPPQNDDDRAKLIDTLQDWKTERYKEIIKSGSVEPRPGVIRLMDEAKAAGKKLAVCSAATKSSVILCLENLIDIERFQGLDCFLAGDDVKEKKPDPSIYITAAEKLGVSVKDCLVVEDSVIGLQAATKAGMSCVITYTSSTSDQNFNDAIAVYPDLSNVKLKDLETLLQTIVTAA</sequence>
<organism>
    <name type="scientific">Arabidopsis thaliana</name>
    <name type="common">Mouse-ear cress</name>
    <dbReference type="NCBI Taxonomy" id="3702"/>
    <lineage>
        <taxon>Eukaryota</taxon>
        <taxon>Viridiplantae</taxon>
        <taxon>Streptophyta</taxon>
        <taxon>Embryophyta</taxon>
        <taxon>Tracheophyta</taxon>
        <taxon>Spermatophyta</taxon>
        <taxon>Magnoliopsida</taxon>
        <taxon>eudicotyledons</taxon>
        <taxon>Gunneridae</taxon>
        <taxon>Pentapetalae</taxon>
        <taxon>rosids</taxon>
        <taxon>malvids</taxon>
        <taxon>Brassicales</taxon>
        <taxon>Brassicaceae</taxon>
        <taxon>Camelineae</taxon>
        <taxon>Arabidopsis</taxon>
    </lineage>
</organism>
<comment type="cofactor">
    <cofactor evidence="1">
        <name>Mg(2+)</name>
        <dbReference type="ChEBI" id="CHEBI:18420"/>
    </cofactor>
</comment>
<comment type="subcellular location">
    <subcellularLocation>
        <location evidence="3">Plastid</location>
        <location evidence="3">Chloroplast</location>
    </subcellularLocation>
</comment>
<comment type="similarity">
    <text evidence="3">Belongs to the HAD-like hydrolase superfamily. DOG/GPP family.</text>
</comment>
<comment type="sequence caution" evidence="3">
    <conflict type="erroneous gene model prediction">
        <sequence resource="EMBL-CDS" id="CAB38910"/>
    </conflict>
</comment>
<comment type="sequence caution" evidence="3">
    <conflict type="erroneous gene model prediction">
        <sequence resource="EMBL-CDS" id="CAB80660"/>
    </conflict>
</comment>